<sequence length="319" mass="34736">MSSQLEALRRHTTVVADTGDFEAMRALRPTDATTNPSLILKAVQKEAYRPLLQQVVRDHRGAPLAELTDRLLVAFGREILNIVPGRVSTEVDARLSFDTRATVERGRGLIALYEAAGIPRERVLIKTASTWEGIQAARLLQADGIRCNLTLLFSLPQAVACADAGVQLISPFVGRIYDWYKKAAGADWVEAERAGANDPGVQSVTEIYRYYKRHGITTEIMGASFRNKGQILALAGCDLLTISPELLAELDGAQGDVPVRLTRDDEAGEVPARRPADEVWFRTELNANAMATEKLAEGIRLFSADAIKLDALLGGAAGR</sequence>
<reference key="1">
    <citation type="journal article" date="2008" name="BMC Genomics">
        <title>The missing link: Bordetella petrii is endowed with both the metabolic versatility of environmental bacteria and virulence traits of pathogenic Bordetellae.</title>
        <authorList>
            <person name="Gross R."/>
            <person name="Guzman C.A."/>
            <person name="Sebaihia M."/>
            <person name="Martin dos Santos V.A.P."/>
            <person name="Pieper D.H."/>
            <person name="Koebnik R."/>
            <person name="Lechner M."/>
            <person name="Bartels D."/>
            <person name="Buhrmester J."/>
            <person name="Choudhuri J.V."/>
            <person name="Ebensen T."/>
            <person name="Gaigalat L."/>
            <person name="Herrmann S."/>
            <person name="Khachane A.N."/>
            <person name="Larisch C."/>
            <person name="Link S."/>
            <person name="Linke B."/>
            <person name="Meyer F."/>
            <person name="Mormann S."/>
            <person name="Nakunst D."/>
            <person name="Rueckert C."/>
            <person name="Schneiker-Bekel S."/>
            <person name="Schulze K."/>
            <person name="Voerholter F.-J."/>
            <person name="Yevsa T."/>
            <person name="Engle J.T."/>
            <person name="Goldman W.E."/>
            <person name="Puehler A."/>
            <person name="Goebel U.B."/>
            <person name="Goesmann A."/>
            <person name="Bloecker H."/>
            <person name="Kaiser O."/>
            <person name="Martinez-Arias R."/>
        </authorList>
    </citation>
    <scope>NUCLEOTIDE SEQUENCE [LARGE SCALE GENOMIC DNA]</scope>
    <source>
        <strain>ATCC BAA-461 / DSM 12804 / CCUG 43448</strain>
    </source>
</reference>
<gene>
    <name evidence="2" type="primary">tal</name>
    <name type="ordered locus">Bpet3545</name>
</gene>
<dbReference type="EC" id="2.2.1.2" evidence="2"/>
<dbReference type="EMBL" id="AM902716">
    <property type="protein sequence ID" value="CAP43888.1"/>
    <property type="molecule type" value="Genomic_DNA"/>
</dbReference>
<dbReference type="SMR" id="A9HYZ1"/>
<dbReference type="STRING" id="94624.Bpet3545"/>
<dbReference type="KEGG" id="bpt:Bpet3545"/>
<dbReference type="eggNOG" id="COG0176">
    <property type="taxonomic scope" value="Bacteria"/>
</dbReference>
<dbReference type="UniPathway" id="UPA00115">
    <property type="reaction ID" value="UER00414"/>
</dbReference>
<dbReference type="Proteomes" id="UP000001225">
    <property type="component" value="Chromosome"/>
</dbReference>
<dbReference type="GO" id="GO:0005737">
    <property type="term" value="C:cytoplasm"/>
    <property type="evidence" value="ECO:0007669"/>
    <property type="project" value="UniProtKB-SubCell"/>
</dbReference>
<dbReference type="GO" id="GO:0004801">
    <property type="term" value="F:transaldolase activity"/>
    <property type="evidence" value="ECO:0000250"/>
    <property type="project" value="UniProtKB"/>
</dbReference>
<dbReference type="GO" id="GO:0005975">
    <property type="term" value="P:carbohydrate metabolic process"/>
    <property type="evidence" value="ECO:0007669"/>
    <property type="project" value="InterPro"/>
</dbReference>
<dbReference type="GO" id="GO:0006098">
    <property type="term" value="P:pentose-phosphate shunt"/>
    <property type="evidence" value="ECO:0007669"/>
    <property type="project" value="UniProtKB-UniRule"/>
</dbReference>
<dbReference type="CDD" id="cd00957">
    <property type="entry name" value="Transaldolase_TalAB"/>
    <property type="match status" value="1"/>
</dbReference>
<dbReference type="FunFam" id="3.20.20.70:FF:000131">
    <property type="entry name" value="Transaldolase"/>
    <property type="match status" value="1"/>
</dbReference>
<dbReference type="Gene3D" id="3.20.20.70">
    <property type="entry name" value="Aldolase class I"/>
    <property type="match status" value="1"/>
</dbReference>
<dbReference type="HAMAP" id="MF_00492">
    <property type="entry name" value="Transaldolase_1"/>
    <property type="match status" value="1"/>
</dbReference>
<dbReference type="InterPro" id="IPR013785">
    <property type="entry name" value="Aldolase_TIM"/>
</dbReference>
<dbReference type="InterPro" id="IPR001585">
    <property type="entry name" value="TAL/FSA"/>
</dbReference>
<dbReference type="InterPro" id="IPR004730">
    <property type="entry name" value="Transaldolase_1"/>
</dbReference>
<dbReference type="InterPro" id="IPR018225">
    <property type="entry name" value="Transaldolase_AS"/>
</dbReference>
<dbReference type="NCBIfam" id="TIGR00874">
    <property type="entry name" value="talAB"/>
    <property type="match status" value="1"/>
</dbReference>
<dbReference type="PANTHER" id="PTHR10683">
    <property type="entry name" value="TRANSALDOLASE"/>
    <property type="match status" value="1"/>
</dbReference>
<dbReference type="PANTHER" id="PTHR10683:SF18">
    <property type="entry name" value="TRANSALDOLASE"/>
    <property type="match status" value="1"/>
</dbReference>
<dbReference type="Pfam" id="PF00923">
    <property type="entry name" value="TAL_FSA"/>
    <property type="match status" value="1"/>
</dbReference>
<dbReference type="SUPFAM" id="SSF51569">
    <property type="entry name" value="Aldolase"/>
    <property type="match status" value="1"/>
</dbReference>
<dbReference type="PROSITE" id="PS01054">
    <property type="entry name" value="TRANSALDOLASE_1"/>
    <property type="match status" value="1"/>
</dbReference>
<feature type="chain" id="PRO_1000126236" description="Transaldolase">
    <location>
        <begin position="1"/>
        <end position="319"/>
    </location>
</feature>
<feature type="active site" description="Schiff-base intermediate with substrate" evidence="2">
    <location>
        <position position="126"/>
    </location>
</feature>
<accession>A9HYZ1</accession>
<protein>
    <recommendedName>
        <fullName evidence="2">Transaldolase</fullName>
        <ecNumber evidence="2">2.2.1.2</ecNumber>
    </recommendedName>
</protein>
<proteinExistence type="inferred from homology"/>
<keyword id="KW-0963">Cytoplasm</keyword>
<keyword id="KW-0570">Pentose shunt</keyword>
<keyword id="KW-0704">Schiff base</keyword>
<keyword id="KW-0808">Transferase</keyword>
<comment type="function">
    <text evidence="2">Transaldolase is important for the balance of metabolites in the pentose-phosphate pathway.</text>
</comment>
<comment type="catalytic activity">
    <reaction evidence="2">
        <text>D-sedoheptulose 7-phosphate + D-glyceraldehyde 3-phosphate = D-erythrose 4-phosphate + beta-D-fructose 6-phosphate</text>
        <dbReference type="Rhea" id="RHEA:17053"/>
        <dbReference type="ChEBI" id="CHEBI:16897"/>
        <dbReference type="ChEBI" id="CHEBI:57483"/>
        <dbReference type="ChEBI" id="CHEBI:57634"/>
        <dbReference type="ChEBI" id="CHEBI:59776"/>
        <dbReference type="EC" id="2.2.1.2"/>
    </reaction>
</comment>
<comment type="pathway">
    <text evidence="2">Carbohydrate degradation; pentose phosphate pathway; D-glyceraldehyde 3-phosphate and beta-D-fructose 6-phosphate from D-ribose 5-phosphate and D-xylulose 5-phosphate (non-oxidative stage): step 2/3.</text>
</comment>
<comment type="subunit">
    <text evidence="1">Homodimer.</text>
</comment>
<comment type="subcellular location">
    <subcellularLocation>
        <location evidence="2">Cytoplasm</location>
    </subcellularLocation>
</comment>
<comment type="similarity">
    <text evidence="2">Belongs to the transaldolase family. Type 1 subfamily.</text>
</comment>
<organism>
    <name type="scientific">Bordetella petrii (strain ATCC BAA-461 / DSM 12804 / CCUG 43448)</name>
    <dbReference type="NCBI Taxonomy" id="340100"/>
    <lineage>
        <taxon>Bacteria</taxon>
        <taxon>Pseudomonadati</taxon>
        <taxon>Pseudomonadota</taxon>
        <taxon>Betaproteobacteria</taxon>
        <taxon>Burkholderiales</taxon>
        <taxon>Alcaligenaceae</taxon>
        <taxon>Bordetella</taxon>
    </lineage>
</organism>
<name>TAL_BORPD</name>
<evidence type="ECO:0000250" key="1"/>
<evidence type="ECO:0000255" key="2">
    <source>
        <dbReference type="HAMAP-Rule" id="MF_00492"/>
    </source>
</evidence>